<keyword id="KW-0249">Electron transport</keyword>
<keyword id="KW-0472">Membrane</keyword>
<keyword id="KW-0496">Mitochondrion</keyword>
<keyword id="KW-0999">Mitochondrion inner membrane</keyword>
<keyword id="KW-0520">NAD</keyword>
<keyword id="KW-0679">Respiratory chain</keyword>
<keyword id="KW-1278">Translocase</keyword>
<keyword id="KW-0812">Transmembrane</keyword>
<keyword id="KW-1133">Transmembrane helix</keyword>
<keyword id="KW-0813">Transport</keyword>
<keyword id="KW-0830">Ubiquinone</keyword>
<accession>Q8M873</accession>
<accession>Q8M872</accession>
<reference key="1">
    <citation type="journal article" date="2002" name="J. Mol. Evol.">
        <title>Intra- and interfamily relationships of Vespertilionidae inferred by various molecular markers including SINE insertion data.</title>
        <authorList>
            <person name="Kawai K."/>
            <person name="Nikaido M."/>
            <person name="Harada M."/>
            <person name="Matsumura S."/>
            <person name="Lin L.K."/>
            <person name="Wu Y."/>
            <person name="Hasegawa M."/>
            <person name="Okada N."/>
        </authorList>
    </citation>
    <scope>NUCLEOTIDE SEQUENCE [GENOMIC DNA]</scope>
    <source>
        <strain>Isolate Australia</strain>
        <strain>Isolate Papua New Guinea</strain>
    </source>
</reference>
<sequence>MYLINLLAMIIPVLLAVAFLTLLERKVLGYMQLRKGPNIVGPYGLLQPIADAVKLFTKEPLQPLTSSPMLFIIAPTLALTLALTMWTPLPMPYPLMNMNLSMLFILALSSLAVYTIMWSGWASNSKYALIGALRAVAQTISYEVTLAIIILSLLLMNGSFTLLSMTTTQEYIWLLIPSWPLAMMWFISTLAETNRAPFDLTEGESELVSGFNVEYAGGPFALFFLAEYANIIMMNALTIILFLGAYHNPMVPELYTINFTTKTLLFTAFFLWIRASYPRFRYDQLMHLLWKNFLPLTLVMCMWHVALPIMLAGIPPQT</sequence>
<feature type="chain" id="PRO_0000256656" description="NADH-ubiquinone oxidoreductase chain 1">
    <location>
        <begin position="1"/>
        <end position="318"/>
    </location>
</feature>
<feature type="transmembrane region" description="Helical" evidence="3">
    <location>
        <begin position="3"/>
        <end position="23"/>
    </location>
</feature>
<feature type="transmembrane region" description="Helical" evidence="3">
    <location>
        <begin position="69"/>
        <end position="89"/>
    </location>
</feature>
<feature type="transmembrane region" description="Helical" evidence="3">
    <location>
        <begin position="102"/>
        <end position="122"/>
    </location>
</feature>
<feature type="transmembrane region" description="Helical" evidence="3">
    <location>
        <begin position="144"/>
        <end position="164"/>
    </location>
</feature>
<feature type="transmembrane region" description="Helical" evidence="3">
    <location>
        <begin position="171"/>
        <end position="191"/>
    </location>
</feature>
<feature type="transmembrane region" description="Helical" evidence="3">
    <location>
        <begin position="222"/>
        <end position="242"/>
    </location>
</feature>
<feature type="transmembrane region" description="Helical" evidence="3">
    <location>
        <begin position="253"/>
        <end position="273"/>
    </location>
</feature>
<feature type="transmembrane region" description="Helical" evidence="3">
    <location>
        <begin position="294"/>
        <end position="314"/>
    </location>
</feature>
<feature type="sequence variant" description="In strain: Isolate Australia.">
    <original>P</original>
    <variation>S</variation>
    <location>
        <position position="249"/>
    </location>
</feature>
<comment type="function">
    <text evidence="1">Core subunit of the mitochondrial membrane respiratory chain NADH dehydrogenase (Complex I) which catalyzes electron transfer from NADH through the respiratory chain, using ubiquinone as an electron acceptor. Essential for the catalytic activity and assembly of complex I.</text>
</comment>
<comment type="catalytic activity">
    <reaction evidence="1">
        <text>a ubiquinone + NADH + 5 H(+)(in) = a ubiquinol + NAD(+) + 4 H(+)(out)</text>
        <dbReference type="Rhea" id="RHEA:29091"/>
        <dbReference type="Rhea" id="RHEA-COMP:9565"/>
        <dbReference type="Rhea" id="RHEA-COMP:9566"/>
        <dbReference type="ChEBI" id="CHEBI:15378"/>
        <dbReference type="ChEBI" id="CHEBI:16389"/>
        <dbReference type="ChEBI" id="CHEBI:17976"/>
        <dbReference type="ChEBI" id="CHEBI:57540"/>
        <dbReference type="ChEBI" id="CHEBI:57945"/>
        <dbReference type="EC" id="7.1.1.2"/>
    </reaction>
</comment>
<comment type="subunit">
    <text evidence="2">Core subunit of respiratory chain NADH dehydrogenase (Complex I) which is composed of 45 different subunits.</text>
</comment>
<comment type="subcellular location">
    <subcellularLocation>
        <location evidence="2">Mitochondrion inner membrane</location>
        <topology evidence="3">Multi-pass membrane protein</topology>
    </subcellularLocation>
</comment>
<comment type="similarity">
    <text evidence="4">Belongs to the complex I subunit 1 family.</text>
</comment>
<dbReference type="EC" id="7.1.1.2" evidence="1"/>
<dbReference type="EMBL" id="AB079829">
    <property type="protein sequence ID" value="BAB92054.1"/>
    <property type="molecule type" value="Genomic_DNA"/>
</dbReference>
<dbReference type="EMBL" id="AB079830">
    <property type="protein sequence ID" value="BAB92055.1"/>
    <property type="molecule type" value="Genomic_DNA"/>
</dbReference>
<dbReference type="SMR" id="Q8M873"/>
<dbReference type="GO" id="GO:0005743">
    <property type="term" value="C:mitochondrial inner membrane"/>
    <property type="evidence" value="ECO:0000250"/>
    <property type="project" value="UniProtKB"/>
</dbReference>
<dbReference type="GO" id="GO:0008137">
    <property type="term" value="F:NADH dehydrogenase (ubiquinone) activity"/>
    <property type="evidence" value="ECO:0000250"/>
    <property type="project" value="UniProtKB"/>
</dbReference>
<dbReference type="GO" id="GO:0006120">
    <property type="term" value="P:mitochondrial electron transport, NADH to ubiquinone"/>
    <property type="evidence" value="ECO:0000250"/>
    <property type="project" value="UniProtKB"/>
</dbReference>
<dbReference type="GO" id="GO:0032981">
    <property type="term" value="P:mitochondrial respiratory chain complex I assembly"/>
    <property type="evidence" value="ECO:0000250"/>
    <property type="project" value="UniProtKB"/>
</dbReference>
<dbReference type="HAMAP" id="MF_01350">
    <property type="entry name" value="NDH1_NuoH"/>
    <property type="match status" value="1"/>
</dbReference>
<dbReference type="InterPro" id="IPR001694">
    <property type="entry name" value="NADH_UbQ_OxRdtase_su1/FPO"/>
</dbReference>
<dbReference type="InterPro" id="IPR018086">
    <property type="entry name" value="NADH_UbQ_OxRdtase_su1_CS"/>
</dbReference>
<dbReference type="PANTHER" id="PTHR11432">
    <property type="entry name" value="NADH DEHYDROGENASE SUBUNIT 1"/>
    <property type="match status" value="1"/>
</dbReference>
<dbReference type="PANTHER" id="PTHR11432:SF3">
    <property type="entry name" value="NADH-UBIQUINONE OXIDOREDUCTASE CHAIN 1"/>
    <property type="match status" value="1"/>
</dbReference>
<dbReference type="Pfam" id="PF00146">
    <property type="entry name" value="NADHdh"/>
    <property type="match status" value="1"/>
</dbReference>
<dbReference type="PROSITE" id="PS00667">
    <property type="entry name" value="COMPLEX1_ND1_1"/>
    <property type="match status" value="1"/>
</dbReference>
<dbReference type="PROSITE" id="PS00668">
    <property type="entry name" value="COMPLEX1_ND1_2"/>
    <property type="match status" value="1"/>
</dbReference>
<proteinExistence type="inferred from homology"/>
<evidence type="ECO:0000250" key="1">
    <source>
        <dbReference type="UniProtKB" id="P03886"/>
    </source>
</evidence>
<evidence type="ECO:0000250" key="2">
    <source>
        <dbReference type="UniProtKB" id="P03887"/>
    </source>
</evidence>
<evidence type="ECO:0000255" key="3"/>
<evidence type="ECO:0000305" key="4"/>
<organism>
    <name type="scientific">Murina florium</name>
    <name type="common">Flores tube-nosed bat</name>
    <dbReference type="NCBI Taxonomy" id="187016"/>
    <lineage>
        <taxon>Eukaryota</taxon>
        <taxon>Metazoa</taxon>
        <taxon>Chordata</taxon>
        <taxon>Craniata</taxon>
        <taxon>Vertebrata</taxon>
        <taxon>Euteleostomi</taxon>
        <taxon>Mammalia</taxon>
        <taxon>Eutheria</taxon>
        <taxon>Laurasiatheria</taxon>
        <taxon>Chiroptera</taxon>
        <taxon>Yangochiroptera</taxon>
        <taxon>Vespertilionidae</taxon>
        <taxon>Murina</taxon>
    </lineage>
</organism>
<geneLocation type="mitochondrion"/>
<name>NU1M_MURFL</name>
<protein>
    <recommendedName>
        <fullName>NADH-ubiquinone oxidoreductase chain 1</fullName>
        <ecNumber evidence="1">7.1.1.2</ecNumber>
    </recommendedName>
    <alternativeName>
        <fullName>NADH dehydrogenase subunit 1</fullName>
    </alternativeName>
</protein>
<gene>
    <name type="primary">MT-ND1</name>
    <name type="synonym">MTND1</name>
    <name type="synonym">NADH1</name>
    <name type="synonym">ND1</name>
</gene>